<proteinExistence type="inferred from homology"/>
<reference key="1">
    <citation type="journal article" date="2010" name="Genome Biol.">
        <title>Structure and dynamics of the pan-genome of Streptococcus pneumoniae and closely related species.</title>
        <authorList>
            <person name="Donati C."/>
            <person name="Hiller N.L."/>
            <person name="Tettelin H."/>
            <person name="Muzzi A."/>
            <person name="Croucher N.J."/>
            <person name="Angiuoli S.V."/>
            <person name="Oggioni M."/>
            <person name="Dunning Hotopp J.C."/>
            <person name="Hu F.Z."/>
            <person name="Riley D.R."/>
            <person name="Covacci A."/>
            <person name="Mitchell T.J."/>
            <person name="Bentley S.D."/>
            <person name="Kilian M."/>
            <person name="Ehrlich G.D."/>
            <person name="Rappuoli R."/>
            <person name="Moxon E.R."/>
            <person name="Masignani V."/>
        </authorList>
    </citation>
    <scope>NUCLEOTIDE SEQUENCE [LARGE SCALE GENOMIC DNA]</scope>
    <source>
        <strain>70585</strain>
    </source>
</reference>
<accession>C1C649</accession>
<sequence>MKKIVFTGGGTVGHVTLNLLLMPKFIEDGWEVHYIGDKRGIEHQEILKSGLDVTFHSIATGKLRRYFSWQNMLDVFKVGWGIVQSLFIMLRLRPQTLFSKGGFVSVPPVIAARVSGVPVFIHESDLSMGLANKIAYKFATKMYSTFEQASSLSKVEHVGAVTKVSDQKNPEPDELVDIQSHFNHKLPTVLFVGGSAGARVFNQLVTDHKKELTERYNIINLTGDSSLNELSQNLFRVDYVTDLYQPLMELADIVVTRGGANTIFELLAIAKLHVIVPLGREASRGDQIENAAYFVKKGYAEDLQESDLTLDSLEEKLSHLLSHKEDYQAKMKASTELKSLADFYQLLKKDLS</sequence>
<protein>
    <recommendedName>
        <fullName evidence="1">UDP-N-acetylglucosamine--N-acetylmuramyl-(pentapeptide) pyrophosphoryl-undecaprenol N-acetylglucosamine transferase</fullName>
        <ecNumber evidence="1">2.4.1.227</ecNumber>
    </recommendedName>
    <alternativeName>
        <fullName evidence="1">Undecaprenyl-PP-MurNAc-pentapeptide-UDPGlcNAc GlcNAc transferase</fullName>
    </alternativeName>
</protein>
<comment type="function">
    <text evidence="1">Cell wall formation. Catalyzes the transfer of a GlcNAc subunit on undecaprenyl-pyrophosphoryl-MurNAc-pentapeptide (lipid intermediate I) to form undecaprenyl-pyrophosphoryl-MurNAc-(pentapeptide)GlcNAc (lipid intermediate II).</text>
</comment>
<comment type="catalytic activity">
    <reaction evidence="1">
        <text>Mur2Ac(oyl-L-Ala-gamma-D-Glu-L-Lys-D-Ala-D-Ala)-di-trans,octa-cis-undecaprenyl diphosphate + UDP-N-acetyl-alpha-D-glucosamine = beta-D-GlcNAc-(1-&gt;4)-Mur2Ac(oyl-L-Ala-gamma-D-Glu-L-Lys-D-Ala-D-Ala)-di-trans,octa-cis-undecaprenyl diphosphate + UDP + H(+)</text>
        <dbReference type="Rhea" id="RHEA:23192"/>
        <dbReference type="ChEBI" id="CHEBI:15378"/>
        <dbReference type="ChEBI" id="CHEBI:57705"/>
        <dbReference type="ChEBI" id="CHEBI:58223"/>
        <dbReference type="ChEBI" id="CHEBI:60032"/>
        <dbReference type="ChEBI" id="CHEBI:60033"/>
        <dbReference type="EC" id="2.4.1.227"/>
    </reaction>
</comment>
<comment type="pathway">
    <text evidence="1">Cell wall biogenesis; peptidoglycan biosynthesis.</text>
</comment>
<comment type="subcellular location">
    <subcellularLocation>
        <location evidence="1">Cell membrane</location>
        <topology evidence="1">Peripheral membrane protein</topology>
        <orientation evidence="1">Cytoplasmic side</orientation>
    </subcellularLocation>
</comment>
<comment type="similarity">
    <text evidence="1">Belongs to the glycosyltransferase 28 family. MurG subfamily.</text>
</comment>
<feature type="chain" id="PRO_1000192145" description="UDP-N-acetylglucosamine--N-acetylmuramyl-(pentapeptide) pyrophosphoryl-undecaprenol N-acetylglucosamine transferase">
    <location>
        <begin position="1"/>
        <end position="352"/>
    </location>
</feature>
<feature type="binding site" evidence="1">
    <location>
        <position position="195"/>
    </location>
    <ligand>
        <name>UDP-N-acetyl-alpha-D-glucosamine</name>
        <dbReference type="ChEBI" id="CHEBI:57705"/>
    </ligand>
</feature>
<feature type="binding site" evidence="1">
    <location>
        <position position="287"/>
    </location>
    <ligand>
        <name>UDP-N-acetyl-alpha-D-glucosamine</name>
        <dbReference type="ChEBI" id="CHEBI:57705"/>
    </ligand>
</feature>
<keyword id="KW-0131">Cell cycle</keyword>
<keyword id="KW-0132">Cell division</keyword>
<keyword id="KW-1003">Cell membrane</keyword>
<keyword id="KW-0133">Cell shape</keyword>
<keyword id="KW-0961">Cell wall biogenesis/degradation</keyword>
<keyword id="KW-0328">Glycosyltransferase</keyword>
<keyword id="KW-0472">Membrane</keyword>
<keyword id="KW-0573">Peptidoglycan synthesis</keyword>
<keyword id="KW-0808">Transferase</keyword>
<organism>
    <name type="scientific">Streptococcus pneumoniae (strain 70585)</name>
    <dbReference type="NCBI Taxonomy" id="488221"/>
    <lineage>
        <taxon>Bacteria</taxon>
        <taxon>Bacillati</taxon>
        <taxon>Bacillota</taxon>
        <taxon>Bacilli</taxon>
        <taxon>Lactobacillales</taxon>
        <taxon>Streptococcaceae</taxon>
        <taxon>Streptococcus</taxon>
    </lineage>
</organism>
<gene>
    <name evidence="1" type="primary">murG</name>
    <name type="ordered locus">SP70585_0746</name>
</gene>
<dbReference type="EC" id="2.4.1.227" evidence="1"/>
<dbReference type="EMBL" id="CP000918">
    <property type="protein sequence ID" value="ACO16386.1"/>
    <property type="molecule type" value="Genomic_DNA"/>
</dbReference>
<dbReference type="RefSeq" id="WP_000724836.1">
    <property type="nucleotide sequence ID" value="NC_012468.1"/>
</dbReference>
<dbReference type="SMR" id="C1C649"/>
<dbReference type="CAZy" id="GT28">
    <property type="family name" value="Glycosyltransferase Family 28"/>
</dbReference>
<dbReference type="KEGG" id="snm:SP70585_0746"/>
<dbReference type="HOGENOM" id="CLU_037404_0_0_9"/>
<dbReference type="UniPathway" id="UPA00219"/>
<dbReference type="Proteomes" id="UP000002211">
    <property type="component" value="Chromosome"/>
</dbReference>
<dbReference type="GO" id="GO:0005886">
    <property type="term" value="C:plasma membrane"/>
    <property type="evidence" value="ECO:0007669"/>
    <property type="project" value="UniProtKB-SubCell"/>
</dbReference>
<dbReference type="GO" id="GO:0050511">
    <property type="term" value="F:undecaprenyldiphospho-muramoylpentapeptide beta-N-acetylglucosaminyltransferase activity"/>
    <property type="evidence" value="ECO:0007669"/>
    <property type="project" value="UniProtKB-UniRule"/>
</dbReference>
<dbReference type="GO" id="GO:0005975">
    <property type="term" value="P:carbohydrate metabolic process"/>
    <property type="evidence" value="ECO:0007669"/>
    <property type="project" value="InterPro"/>
</dbReference>
<dbReference type="GO" id="GO:0051301">
    <property type="term" value="P:cell division"/>
    <property type="evidence" value="ECO:0007669"/>
    <property type="project" value="UniProtKB-KW"/>
</dbReference>
<dbReference type="GO" id="GO:0071555">
    <property type="term" value="P:cell wall organization"/>
    <property type="evidence" value="ECO:0007669"/>
    <property type="project" value="UniProtKB-KW"/>
</dbReference>
<dbReference type="GO" id="GO:0030259">
    <property type="term" value="P:lipid glycosylation"/>
    <property type="evidence" value="ECO:0007669"/>
    <property type="project" value="UniProtKB-UniRule"/>
</dbReference>
<dbReference type="GO" id="GO:0009252">
    <property type="term" value="P:peptidoglycan biosynthetic process"/>
    <property type="evidence" value="ECO:0007669"/>
    <property type="project" value="UniProtKB-UniRule"/>
</dbReference>
<dbReference type="GO" id="GO:0008360">
    <property type="term" value="P:regulation of cell shape"/>
    <property type="evidence" value="ECO:0007669"/>
    <property type="project" value="UniProtKB-KW"/>
</dbReference>
<dbReference type="CDD" id="cd03785">
    <property type="entry name" value="GT28_MurG"/>
    <property type="match status" value="1"/>
</dbReference>
<dbReference type="Gene3D" id="3.40.50.2000">
    <property type="entry name" value="Glycogen Phosphorylase B"/>
    <property type="match status" value="2"/>
</dbReference>
<dbReference type="HAMAP" id="MF_00033">
    <property type="entry name" value="MurG"/>
    <property type="match status" value="1"/>
</dbReference>
<dbReference type="InterPro" id="IPR006009">
    <property type="entry name" value="GlcNAc_MurG"/>
</dbReference>
<dbReference type="InterPro" id="IPR007235">
    <property type="entry name" value="Glyco_trans_28_C"/>
</dbReference>
<dbReference type="InterPro" id="IPR004276">
    <property type="entry name" value="GlycoTrans_28_N"/>
</dbReference>
<dbReference type="PANTHER" id="PTHR21015:SF27">
    <property type="entry name" value="UDP-N-ACETYLGLUCOSAMINE--N-ACETYLMURAMYL-(PENTAPEPTIDE) PYROPHOSPHORYL-UNDECAPRENOL N-ACETYLGLUCOSAMINE TRANSFERASE"/>
    <property type="match status" value="1"/>
</dbReference>
<dbReference type="PANTHER" id="PTHR21015">
    <property type="entry name" value="UDP-N-ACETYLGLUCOSAMINE--N-ACETYLMURAMYL-(PENTAPEPTIDE) PYROPHOSPHORYL-UNDECAPRENOL N-ACETYLGLUCOSAMINE TRANSFERASE 1"/>
    <property type="match status" value="1"/>
</dbReference>
<dbReference type="Pfam" id="PF04101">
    <property type="entry name" value="Glyco_tran_28_C"/>
    <property type="match status" value="1"/>
</dbReference>
<dbReference type="Pfam" id="PF03033">
    <property type="entry name" value="Glyco_transf_28"/>
    <property type="match status" value="1"/>
</dbReference>
<dbReference type="SUPFAM" id="SSF53756">
    <property type="entry name" value="UDP-Glycosyltransferase/glycogen phosphorylase"/>
    <property type="match status" value="1"/>
</dbReference>
<evidence type="ECO:0000255" key="1">
    <source>
        <dbReference type="HAMAP-Rule" id="MF_00033"/>
    </source>
</evidence>
<name>MURG_STRP7</name>